<reference key="1">
    <citation type="journal article" date="2006" name="Proc. Natl. Acad. Sci. U.S.A.">
        <title>Comparative genomics of the lactic acid bacteria.</title>
        <authorList>
            <person name="Makarova K.S."/>
            <person name="Slesarev A."/>
            <person name="Wolf Y.I."/>
            <person name="Sorokin A."/>
            <person name="Mirkin B."/>
            <person name="Koonin E.V."/>
            <person name="Pavlov A."/>
            <person name="Pavlova N."/>
            <person name="Karamychev V."/>
            <person name="Polouchine N."/>
            <person name="Shakhova V."/>
            <person name="Grigoriev I."/>
            <person name="Lou Y."/>
            <person name="Rohksar D."/>
            <person name="Lucas S."/>
            <person name="Huang K."/>
            <person name="Goodstein D.M."/>
            <person name="Hawkins T."/>
            <person name="Plengvidhya V."/>
            <person name="Welker D."/>
            <person name="Hughes J."/>
            <person name="Goh Y."/>
            <person name="Benson A."/>
            <person name="Baldwin K."/>
            <person name="Lee J.-H."/>
            <person name="Diaz-Muniz I."/>
            <person name="Dosti B."/>
            <person name="Smeianov V."/>
            <person name="Wechter W."/>
            <person name="Barabote R."/>
            <person name="Lorca G."/>
            <person name="Altermann E."/>
            <person name="Barrangou R."/>
            <person name="Ganesan B."/>
            <person name="Xie Y."/>
            <person name="Rawsthorne H."/>
            <person name="Tamir D."/>
            <person name="Parker C."/>
            <person name="Breidt F."/>
            <person name="Broadbent J.R."/>
            <person name="Hutkins R."/>
            <person name="O'Sullivan D."/>
            <person name="Steele J."/>
            <person name="Unlu G."/>
            <person name="Saier M.H. Jr."/>
            <person name="Klaenhammer T."/>
            <person name="Richardson P."/>
            <person name="Kozyavkin S."/>
            <person name="Weimer B.C."/>
            <person name="Mills D.A."/>
        </authorList>
    </citation>
    <scope>NUCLEOTIDE SEQUENCE [LARGE SCALE GENOMIC DNA]</scope>
    <source>
        <strain>SK11</strain>
    </source>
</reference>
<organism>
    <name type="scientific">Lactococcus lactis subsp. cremoris (strain SK11)</name>
    <dbReference type="NCBI Taxonomy" id="272622"/>
    <lineage>
        <taxon>Bacteria</taxon>
        <taxon>Bacillati</taxon>
        <taxon>Bacillota</taxon>
        <taxon>Bacilli</taxon>
        <taxon>Lactobacillales</taxon>
        <taxon>Streptococcaceae</taxon>
        <taxon>Lactococcus</taxon>
        <taxon>Lactococcus cremoris subsp. cremoris</taxon>
    </lineage>
</organism>
<name>RL16_LACLS</name>
<feature type="chain" id="PRO_1000054643" description="Large ribosomal subunit protein uL16">
    <location>
        <begin position="1"/>
        <end position="137"/>
    </location>
</feature>
<evidence type="ECO:0000255" key="1">
    <source>
        <dbReference type="HAMAP-Rule" id="MF_01342"/>
    </source>
</evidence>
<evidence type="ECO:0000305" key="2"/>
<comment type="function">
    <text evidence="1">Binds 23S rRNA and is also seen to make contacts with the A and possibly P site tRNAs.</text>
</comment>
<comment type="subunit">
    <text evidence="1">Part of the 50S ribosomal subunit.</text>
</comment>
<comment type="similarity">
    <text evidence="1">Belongs to the universal ribosomal protein uL16 family.</text>
</comment>
<sequence>MLVPKRVKHRREFRGKMRGYAKGGDTVSFGEYGLQATTSHWITNRQIEAARIAMTRYMKRNGQVWIKIFPHKSYTAKAIGVRMGSGKGAPEGWVAPVKRGVVMFELGGVDEATAREALRLASHKLPVKTKFVKRGEA</sequence>
<dbReference type="EMBL" id="CP000425">
    <property type="protein sequence ID" value="ABJ73841.1"/>
    <property type="molecule type" value="Genomic_DNA"/>
</dbReference>
<dbReference type="RefSeq" id="WP_011677158.1">
    <property type="nucleotide sequence ID" value="NC_008527.1"/>
</dbReference>
<dbReference type="SMR" id="Q02W31"/>
<dbReference type="GeneID" id="61110420"/>
<dbReference type="KEGG" id="llc:LACR_2395"/>
<dbReference type="HOGENOM" id="CLU_078858_2_1_9"/>
<dbReference type="Proteomes" id="UP000000240">
    <property type="component" value="Chromosome"/>
</dbReference>
<dbReference type="GO" id="GO:0022625">
    <property type="term" value="C:cytosolic large ribosomal subunit"/>
    <property type="evidence" value="ECO:0007669"/>
    <property type="project" value="TreeGrafter"/>
</dbReference>
<dbReference type="GO" id="GO:0019843">
    <property type="term" value="F:rRNA binding"/>
    <property type="evidence" value="ECO:0007669"/>
    <property type="project" value="UniProtKB-UniRule"/>
</dbReference>
<dbReference type="GO" id="GO:0003735">
    <property type="term" value="F:structural constituent of ribosome"/>
    <property type="evidence" value="ECO:0007669"/>
    <property type="project" value="InterPro"/>
</dbReference>
<dbReference type="GO" id="GO:0000049">
    <property type="term" value="F:tRNA binding"/>
    <property type="evidence" value="ECO:0007669"/>
    <property type="project" value="UniProtKB-KW"/>
</dbReference>
<dbReference type="GO" id="GO:0006412">
    <property type="term" value="P:translation"/>
    <property type="evidence" value="ECO:0007669"/>
    <property type="project" value="UniProtKB-UniRule"/>
</dbReference>
<dbReference type="CDD" id="cd01433">
    <property type="entry name" value="Ribosomal_L16_L10e"/>
    <property type="match status" value="1"/>
</dbReference>
<dbReference type="FunFam" id="3.90.1170.10:FF:000001">
    <property type="entry name" value="50S ribosomal protein L16"/>
    <property type="match status" value="1"/>
</dbReference>
<dbReference type="Gene3D" id="3.90.1170.10">
    <property type="entry name" value="Ribosomal protein L10e/L16"/>
    <property type="match status" value="1"/>
</dbReference>
<dbReference type="HAMAP" id="MF_01342">
    <property type="entry name" value="Ribosomal_uL16"/>
    <property type="match status" value="1"/>
</dbReference>
<dbReference type="InterPro" id="IPR047873">
    <property type="entry name" value="Ribosomal_uL16"/>
</dbReference>
<dbReference type="InterPro" id="IPR000114">
    <property type="entry name" value="Ribosomal_uL16_bact-type"/>
</dbReference>
<dbReference type="InterPro" id="IPR020798">
    <property type="entry name" value="Ribosomal_uL16_CS"/>
</dbReference>
<dbReference type="InterPro" id="IPR016180">
    <property type="entry name" value="Ribosomal_uL16_dom"/>
</dbReference>
<dbReference type="InterPro" id="IPR036920">
    <property type="entry name" value="Ribosomal_uL16_sf"/>
</dbReference>
<dbReference type="NCBIfam" id="TIGR01164">
    <property type="entry name" value="rplP_bact"/>
    <property type="match status" value="1"/>
</dbReference>
<dbReference type="PANTHER" id="PTHR12220">
    <property type="entry name" value="50S/60S RIBOSOMAL PROTEIN L16"/>
    <property type="match status" value="1"/>
</dbReference>
<dbReference type="PANTHER" id="PTHR12220:SF13">
    <property type="entry name" value="LARGE RIBOSOMAL SUBUNIT PROTEIN UL16M"/>
    <property type="match status" value="1"/>
</dbReference>
<dbReference type="Pfam" id="PF00252">
    <property type="entry name" value="Ribosomal_L16"/>
    <property type="match status" value="1"/>
</dbReference>
<dbReference type="PRINTS" id="PR00060">
    <property type="entry name" value="RIBOSOMALL16"/>
</dbReference>
<dbReference type="SUPFAM" id="SSF54686">
    <property type="entry name" value="Ribosomal protein L16p/L10e"/>
    <property type="match status" value="1"/>
</dbReference>
<dbReference type="PROSITE" id="PS00586">
    <property type="entry name" value="RIBOSOMAL_L16_1"/>
    <property type="match status" value="1"/>
</dbReference>
<dbReference type="PROSITE" id="PS00701">
    <property type="entry name" value="RIBOSOMAL_L16_2"/>
    <property type="match status" value="1"/>
</dbReference>
<keyword id="KW-0687">Ribonucleoprotein</keyword>
<keyword id="KW-0689">Ribosomal protein</keyword>
<keyword id="KW-0694">RNA-binding</keyword>
<keyword id="KW-0699">rRNA-binding</keyword>
<keyword id="KW-0820">tRNA-binding</keyword>
<accession>Q02W31</accession>
<proteinExistence type="inferred from homology"/>
<protein>
    <recommendedName>
        <fullName evidence="1">Large ribosomal subunit protein uL16</fullName>
    </recommendedName>
    <alternativeName>
        <fullName evidence="2">50S ribosomal protein L16</fullName>
    </alternativeName>
</protein>
<gene>
    <name evidence="1" type="primary">rplP</name>
    <name type="ordered locus">LACR_2395</name>
</gene>